<sequence>MSNIVYLTVTGEQQGSISAGCGTSESTGNRWQSGHEDEIFTFSLLNNINNTGLGSQFHGITFCKLIDKSTPLFINSINNNEQLFMGFDFYRINRFGRLEKYYYIQLRGAFLSAIHHQIIENQLDTETITISYEFILCQHLIANTEFSYLALPENYNRLFLPNSKNQTNNRFKTLNSKAIGRLLAAGGVYNGNIEGFRDTAEKLGGDAIKGYDQILNEKTAGIAIATASILLTKRSNVDTYTEINSYLGKLRGQQKLLDGIDIIEIIYIKRPSKDLANLRKEFNKTVRKNFLIKLAKTSEASGRFNAEDLLRMRKGNVPLNYNVHHKLSLDDGGTNDFENLVLIENEPYHKVFTNMQSRIAKGILVGESKITPWAIPSGSIYPPMKNIMDHTK</sequence>
<comment type="similarity">
    <text evidence="1">Belongs to the hcp1 family.</text>
</comment>
<keyword id="KW-1185">Reference proteome</keyword>
<name>YHHZ_ECOLI</name>
<dbReference type="EMBL" id="U18997">
    <property type="protein sequence ID" value="AAA58240.1"/>
    <property type="molecule type" value="Genomic_DNA"/>
</dbReference>
<dbReference type="EMBL" id="U00096">
    <property type="protein sequence ID" value="AAC76467.1"/>
    <property type="molecule type" value="Genomic_DNA"/>
</dbReference>
<dbReference type="EMBL" id="AP009048">
    <property type="protein sequence ID" value="BAE77851.1"/>
    <property type="molecule type" value="Genomic_DNA"/>
</dbReference>
<dbReference type="PIR" id="E65140">
    <property type="entry name" value="E65140"/>
</dbReference>
<dbReference type="RefSeq" id="NP_417899.1">
    <property type="nucleotide sequence ID" value="NC_000913.3"/>
</dbReference>
<dbReference type="RefSeq" id="WP_000065894.1">
    <property type="nucleotide sequence ID" value="NZ_SSZK01000008.1"/>
</dbReference>
<dbReference type="SMR" id="P46855"/>
<dbReference type="BioGRID" id="4259624">
    <property type="interactions" value="201"/>
</dbReference>
<dbReference type="FunCoup" id="P46855">
    <property type="interactions" value="15"/>
</dbReference>
<dbReference type="STRING" id="511145.b3442"/>
<dbReference type="jPOST" id="P46855"/>
<dbReference type="PaxDb" id="511145-b3442"/>
<dbReference type="EnsemblBacteria" id="AAC76467">
    <property type="protein sequence ID" value="AAC76467"/>
    <property type="gene ID" value="b3442"/>
</dbReference>
<dbReference type="GeneID" id="947952"/>
<dbReference type="KEGG" id="ecj:JW3406"/>
<dbReference type="KEGG" id="eco:b3442"/>
<dbReference type="KEGG" id="ecoc:C3026_18650"/>
<dbReference type="PATRIC" id="fig|511145.12.peg.3539"/>
<dbReference type="EchoBASE" id="EB2780"/>
<dbReference type="eggNOG" id="COG3157">
    <property type="taxonomic scope" value="Bacteria"/>
</dbReference>
<dbReference type="HOGENOM" id="CLU_047715_2_0_6"/>
<dbReference type="InParanoid" id="P46855"/>
<dbReference type="OMA" id="LPENYNC"/>
<dbReference type="OrthoDB" id="5674026at2"/>
<dbReference type="BioCyc" id="EcoCyc:G7759-MONOMER"/>
<dbReference type="PRO" id="PR:P46855"/>
<dbReference type="Proteomes" id="UP000000625">
    <property type="component" value="Chromosome"/>
</dbReference>
<dbReference type="CDD" id="cd00085">
    <property type="entry name" value="HNHc"/>
    <property type="match status" value="1"/>
</dbReference>
<dbReference type="Gene3D" id="2.30.110.20">
    <property type="entry name" value="Hcp1-like"/>
    <property type="match status" value="1"/>
</dbReference>
<dbReference type="InterPro" id="IPR036624">
    <property type="entry name" value="Hcp1-lik_sf"/>
</dbReference>
<dbReference type="InterPro" id="IPR044925">
    <property type="entry name" value="His-Me_finger_sf"/>
</dbReference>
<dbReference type="InterPro" id="IPR003615">
    <property type="entry name" value="HNH_nuc"/>
</dbReference>
<dbReference type="InterPro" id="IPR008514">
    <property type="entry name" value="T6SS_Hcp"/>
</dbReference>
<dbReference type="InterPro" id="IPR052947">
    <property type="entry name" value="T6SS_Hcp1_domain"/>
</dbReference>
<dbReference type="NCBIfam" id="TIGR03344">
    <property type="entry name" value="VI_effect_Hcp1"/>
    <property type="match status" value="1"/>
</dbReference>
<dbReference type="PANTHER" id="PTHR34319:SF7">
    <property type="entry name" value="HNH ENDONUCLEASE DOMAIN-CONTAINING PROTEIN"/>
    <property type="match status" value="1"/>
</dbReference>
<dbReference type="PANTHER" id="PTHR34319">
    <property type="entry name" value="MAJOR EXPORTED PROTEIN"/>
    <property type="match status" value="1"/>
</dbReference>
<dbReference type="Pfam" id="PF05638">
    <property type="entry name" value="T6SS_HCP"/>
    <property type="match status" value="1"/>
</dbReference>
<dbReference type="SUPFAM" id="SSF141452">
    <property type="entry name" value="Hcp1-like"/>
    <property type="match status" value="1"/>
</dbReference>
<dbReference type="SUPFAM" id="SSF54060">
    <property type="entry name" value="His-Me finger endonucleases"/>
    <property type="match status" value="1"/>
</dbReference>
<organism>
    <name type="scientific">Escherichia coli (strain K12)</name>
    <dbReference type="NCBI Taxonomy" id="83333"/>
    <lineage>
        <taxon>Bacteria</taxon>
        <taxon>Pseudomonadati</taxon>
        <taxon>Pseudomonadota</taxon>
        <taxon>Gammaproteobacteria</taxon>
        <taxon>Enterobacterales</taxon>
        <taxon>Enterobacteriaceae</taxon>
        <taxon>Escherichia</taxon>
    </lineage>
</organism>
<protein>
    <recommendedName>
        <fullName>Uncharacterized protein YhhZ</fullName>
    </recommendedName>
</protein>
<gene>
    <name type="primary">yhhZ</name>
    <name type="ordered locus">b3442</name>
    <name type="ordered locus">JW3406</name>
</gene>
<accession>P46855</accession>
<accession>Q2M7A5</accession>
<evidence type="ECO:0000305" key="1"/>
<proteinExistence type="inferred from homology"/>
<reference key="1">
    <citation type="journal article" date="1997" name="Science">
        <title>The complete genome sequence of Escherichia coli K-12.</title>
        <authorList>
            <person name="Blattner F.R."/>
            <person name="Plunkett G. III"/>
            <person name="Bloch C.A."/>
            <person name="Perna N.T."/>
            <person name="Burland V."/>
            <person name="Riley M."/>
            <person name="Collado-Vides J."/>
            <person name="Glasner J.D."/>
            <person name="Rode C.K."/>
            <person name="Mayhew G.F."/>
            <person name="Gregor J."/>
            <person name="Davis N.W."/>
            <person name="Kirkpatrick H.A."/>
            <person name="Goeden M.A."/>
            <person name="Rose D.J."/>
            <person name="Mau B."/>
            <person name="Shao Y."/>
        </authorList>
    </citation>
    <scope>NUCLEOTIDE SEQUENCE [LARGE SCALE GENOMIC DNA]</scope>
    <source>
        <strain>K12 / MG1655 / ATCC 47076</strain>
    </source>
</reference>
<reference key="2">
    <citation type="journal article" date="2006" name="Mol. Syst. Biol.">
        <title>Highly accurate genome sequences of Escherichia coli K-12 strains MG1655 and W3110.</title>
        <authorList>
            <person name="Hayashi K."/>
            <person name="Morooka N."/>
            <person name="Yamamoto Y."/>
            <person name="Fujita K."/>
            <person name="Isono K."/>
            <person name="Choi S."/>
            <person name="Ohtsubo E."/>
            <person name="Baba T."/>
            <person name="Wanner B.L."/>
            <person name="Mori H."/>
            <person name="Horiuchi T."/>
        </authorList>
    </citation>
    <scope>NUCLEOTIDE SEQUENCE [LARGE SCALE GENOMIC DNA]</scope>
    <source>
        <strain>K12 / W3110 / ATCC 27325 / DSM 5911</strain>
    </source>
</reference>
<feature type="chain" id="PRO_0000169558" description="Uncharacterized protein YhhZ">
    <location>
        <begin position="1"/>
        <end position="392"/>
    </location>
</feature>